<gene>
    <name evidence="1" type="primary">hxB</name>
    <name type="ORF">AN1637</name>
</gene>
<keyword id="KW-0501">Molybdenum cofactor biosynthesis</keyword>
<keyword id="KW-0663">Pyridoxal phosphate</keyword>
<keyword id="KW-1185">Reference proteome</keyword>
<keyword id="KW-0808">Transferase</keyword>
<reference key="1">
    <citation type="journal article" date="2000" name="Mol. Microbiol.">
        <title>Comparison of the sequences of the Aspergillus nidulans hxB and Drosophila melanogaster ma-l genes with nifS from Azotobacter vinelandii suggests a mechanism for the insertion of the terminal sulphur atom in the molybdopterin cofactor.</title>
        <authorList>
            <person name="Amrani L."/>
            <person name="Primus J."/>
            <person name="Glatigny A."/>
            <person name="Arcangeli L."/>
            <person name="Scazzocchio C."/>
            <person name="Finnerty V."/>
        </authorList>
    </citation>
    <scope>NUCLEOTIDE SEQUENCE [GENOMIC DNA]</scope>
    <scope>FUNCTION</scope>
    <scope>PATHWAY</scope>
</reference>
<reference key="2">
    <citation type="journal article" date="2005" name="Nature">
        <title>Sequencing of Aspergillus nidulans and comparative analysis with A. fumigatus and A. oryzae.</title>
        <authorList>
            <person name="Galagan J.E."/>
            <person name="Calvo S.E."/>
            <person name="Cuomo C."/>
            <person name="Ma L.-J."/>
            <person name="Wortman J.R."/>
            <person name="Batzoglou S."/>
            <person name="Lee S.-I."/>
            <person name="Bastuerkmen M."/>
            <person name="Spevak C.C."/>
            <person name="Clutterbuck J."/>
            <person name="Kapitonov V."/>
            <person name="Jurka J."/>
            <person name="Scazzocchio C."/>
            <person name="Farman M.L."/>
            <person name="Butler J."/>
            <person name="Purcell S."/>
            <person name="Harris S."/>
            <person name="Braus G.H."/>
            <person name="Draht O."/>
            <person name="Busch S."/>
            <person name="D'Enfert C."/>
            <person name="Bouchier C."/>
            <person name="Goldman G.H."/>
            <person name="Bell-Pedersen D."/>
            <person name="Griffiths-Jones S."/>
            <person name="Doonan J.H."/>
            <person name="Yu J."/>
            <person name="Vienken K."/>
            <person name="Pain A."/>
            <person name="Freitag M."/>
            <person name="Selker E.U."/>
            <person name="Archer D.B."/>
            <person name="Penalva M.A."/>
            <person name="Oakley B.R."/>
            <person name="Momany M."/>
            <person name="Tanaka T."/>
            <person name="Kumagai T."/>
            <person name="Asai K."/>
            <person name="Machida M."/>
            <person name="Nierman W.C."/>
            <person name="Denning D.W."/>
            <person name="Caddick M.X."/>
            <person name="Hynes M."/>
            <person name="Paoletti M."/>
            <person name="Fischer R."/>
            <person name="Miller B.L."/>
            <person name="Dyer P.S."/>
            <person name="Sachs M.S."/>
            <person name="Osmani S.A."/>
            <person name="Birren B.W."/>
        </authorList>
    </citation>
    <scope>NUCLEOTIDE SEQUENCE [LARGE SCALE GENOMIC DNA]</scope>
    <source>
        <strain>FGSC A4 / ATCC 38163 / CBS 112.46 / NRRL 194 / M139</strain>
    </source>
</reference>
<reference key="3">
    <citation type="journal article" date="2009" name="Fungal Genet. Biol.">
        <title>The 2008 update of the Aspergillus nidulans genome annotation: a community effort.</title>
        <authorList>
            <person name="Wortman J.R."/>
            <person name="Gilsenan J.M."/>
            <person name="Joardar V."/>
            <person name="Deegan J."/>
            <person name="Clutterbuck J."/>
            <person name="Andersen M.R."/>
            <person name="Archer D."/>
            <person name="Bencina M."/>
            <person name="Braus G."/>
            <person name="Coutinho P."/>
            <person name="von Dohren H."/>
            <person name="Doonan J."/>
            <person name="Driessen A.J."/>
            <person name="Durek P."/>
            <person name="Espeso E."/>
            <person name="Fekete E."/>
            <person name="Flipphi M."/>
            <person name="Estrada C.G."/>
            <person name="Geysens S."/>
            <person name="Goldman G."/>
            <person name="de Groot P.W."/>
            <person name="Hansen K."/>
            <person name="Harris S.D."/>
            <person name="Heinekamp T."/>
            <person name="Helmstaedt K."/>
            <person name="Henrissat B."/>
            <person name="Hofmann G."/>
            <person name="Homan T."/>
            <person name="Horio T."/>
            <person name="Horiuchi H."/>
            <person name="James S."/>
            <person name="Jones M."/>
            <person name="Karaffa L."/>
            <person name="Karanyi Z."/>
            <person name="Kato M."/>
            <person name="Keller N."/>
            <person name="Kelly D.E."/>
            <person name="Kiel J.A."/>
            <person name="Kim J.M."/>
            <person name="van der Klei I.J."/>
            <person name="Klis F.M."/>
            <person name="Kovalchuk A."/>
            <person name="Krasevec N."/>
            <person name="Kubicek C.P."/>
            <person name="Liu B."/>
            <person name="Maccabe A."/>
            <person name="Meyer V."/>
            <person name="Mirabito P."/>
            <person name="Miskei M."/>
            <person name="Mos M."/>
            <person name="Mullins J."/>
            <person name="Nelson D.R."/>
            <person name="Nielsen J."/>
            <person name="Oakley B.R."/>
            <person name="Osmani S.A."/>
            <person name="Pakula T."/>
            <person name="Paszewski A."/>
            <person name="Paulsen I."/>
            <person name="Pilsyk S."/>
            <person name="Pocsi I."/>
            <person name="Punt P.J."/>
            <person name="Ram A.F."/>
            <person name="Ren Q."/>
            <person name="Robellet X."/>
            <person name="Robson G."/>
            <person name="Seiboth B."/>
            <person name="van Solingen P."/>
            <person name="Specht T."/>
            <person name="Sun J."/>
            <person name="Taheri-Talesh N."/>
            <person name="Takeshita N."/>
            <person name="Ussery D."/>
            <person name="vanKuyk P.A."/>
            <person name="Visser H."/>
            <person name="van de Vondervoort P.J."/>
            <person name="de Vries R.P."/>
            <person name="Walton J."/>
            <person name="Xiang X."/>
            <person name="Xiong Y."/>
            <person name="Zeng A.P."/>
            <person name="Brandt B.W."/>
            <person name="Cornell M.J."/>
            <person name="van den Hondel C.A."/>
            <person name="Visser J."/>
            <person name="Oliver S.G."/>
            <person name="Turner G."/>
        </authorList>
    </citation>
    <scope>GENOME REANNOTATION</scope>
    <source>
        <strain>FGSC A4 / ATCC 38163 / CBS 112.46 / NRRL 194 / M139</strain>
    </source>
</reference>
<reference key="4">
    <citation type="journal article" date="1999" name="Mol. Microbiol.">
        <title>The hxB gene, necessary for the post-translational activation of purine hydroxylases in Aspergillus nidulans, is independently controlled by the purine utilization and the nicotinate utilization transcriptional activating systems.</title>
        <authorList>
            <person name="Amrani L."/>
            <person name="Cecchetto G."/>
            <person name="Scazzocchio C."/>
            <person name="Glatigny A."/>
        </authorList>
    </citation>
    <scope>INDUCTION</scope>
</reference>
<accession>Q9UV64</accession>
<accession>C8VNI3</accession>
<accession>Q5BCU3</accession>
<feature type="chain" id="PRO_0000249963" description="Molybdenum cofactor sulfurase">
    <location>
        <begin position="1"/>
        <end position="839"/>
    </location>
</feature>
<feature type="domain" description="MOSC" evidence="1">
    <location>
        <begin position="656"/>
        <end position="834"/>
    </location>
</feature>
<feature type="region of interest" description="Disordered" evidence="2">
    <location>
        <begin position="651"/>
        <end position="678"/>
    </location>
</feature>
<feature type="compositionally biased region" description="Polar residues" evidence="2">
    <location>
        <begin position="651"/>
        <end position="662"/>
    </location>
</feature>
<feature type="active site" evidence="1">
    <location>
        <position position="401"/>
    </location>
</feature>
<feature type="modified residue" description="N6-(pyridoxal phosphate)lysine" evidence="1">
    <location>
        <position position="237"/>
    </location>
</feature>
<feature type="sequence conflict" description="In Ref. 1; AAF22564." evidence="5" ref="1">
    <original>VDDIR</original>
    <variation>AGRYS</variation>
    <location>
        <begin position="78"/>
        <end position="82"/>
    </location>
</feature>
<feature type="sequence conflict" description="In Ref. 1; AAF22564." evidence="5" ref="1">
    <original>T</original>
    <variation>S</variation>
    <location>
        <position position="344"/>
    </location>
</feature>
<dbReference type="EC" id="2.8.1.9" evidence="1"/>
<dbReference type="EMBL" id="AF128114">
    <property type="protein sequence ID" value="AAF22564.1"/>
    <property type="molecule type" value="Genomic_DNA"/>
</dbReference>
<dbReference type="EMBL" id="AACD01000026">
    <property type="protein sequence ID" value="EAA64757.1"/>
    <property type="molecule type" value="Genomic_DNA"/>
</dbReference>
<dbReference type="EMBL" id="BN001307">
    <property type="protein sequence ID" value="CBF85269.1"/>
    <property type="molecule type" value="Genomic_DNA"/>
</dbReference>
<dbReference type="RefSeq" id="XP_659241.1">
    <property type="nucleotide sequence ID" value="XM_654149.1"/>
</dbReference>
<dbReference type="SMR" id="Q9UV64"/>
<dbReference type="STRING" id="227321.Q9UV64"/>
<dbReference type="EnsemblFungi" id="CBF85269">
    <property type="protein sequence ID" value="CBF85269"/>
    <property type="gene ID" value="ANIA_01637"/>
</dbReference>
<dbReference type="KEGG" id="ani:ANIA_01637"/>
<dbReference type="eggNOG" id="KOG2142">
    <property type="taxonomic scope" value="Eukaryota"/>
</dbReference>
<dbReference type="HOGENOM" id="CLU_010913_0_0_1"/>
<dbReference type="InParanoid" id="Q9UV64"/>
<dbReference type="OMA" id="PCTRCQM"/>
<dbReference type="OrthoDB" id="10264306at2759"/>
<dbReference type="UniPathway" id="UPA00344"/>
<dbReference type="Proteomes" id="UP000000560">
    <property type="component" value="Chromosome VII"/>
</dbReference>
<dbReference type="GO" id="GO:0016829">
    <property type="term" value="F:lyase activity"/>
    <property type="evidence" value="ECO:0007669"/>
    <property type="project" value="UniProtKB-UniRule"/>
</dbReference>
<dbReference type="GO" id="GO:0008265">
    <property type="term" value="F:molybdenum cofactor sulfurtransferase activity"/>
    <property type="evidence" value="ECO:0000318"/>
    <property type="project" value="GO_Central"/>
</dbReference>
<dbReference type="GO" id="GO:0030151">
    <property type="term" value="F:molybdenum ion binding"/>
    <property type="evidence" value="ECO:0007669"/>
    <property type="project" value="UniProtKB-UniRule"/>
</dbReference>
<dbReference type="GO" id="GO:0030170">
    <property type="term" value="F:pyridoxal phosphate binding"/>
    <property type="evidence" value="ECO:0007669"/>
    <property type="project" value="UniProtKB-UniRule"/>
</dbReference>
<dbReference type="GO" id="GO:0006777">
    <property type="term" value="P:Mo-molybdopterin cofactor biosynthetic process"/>
    <property type="evidence" value="ECO:0007669"/>
    <property type="project" value="UniProtKB-UniRule"/>
</dbReference>
<dbReference type="GO" id="GO:0043545">
    <property type="term" value="P:molybdopterin cofactor metabolic process"/>
    <property type="evidence" value="ECO:0000318"/>
    <property type="project" value="GO_Central"/>
</dbReference>
<dbReference type="Gene3D" id="3.90.1150.10">
    <property type="entry name" value="Aspartate Aminotransferase, domain 1"/>
    <property type="match status" value="1"/>
</dbReference>
<dbReference type="Gene3D" id="3.40.640.10">
    <property type="entry name" value="Type I PLP-dependent aspartate aminotransferase-like (Major domain)"/>
    <property type="match status" value="1"/>
</dbReference>
<dbReference type="HAMAP" id="MF_03050">
    <property type="entry name" value="MOCOS"/>
    <property type="match status" value="1"/>
</dbReference>
<dbReference type="InterPro" id="IPR000192">
    <property type="entry name" value="Aminotrans_V_dom"/>
</dbReference>
<dbReference type="InterPro" id="IPR005302">
    <property type="entry name" value="MoCF_Sase_C"/>
</dbReference>
<dbReference type="InterPro" id="IPR028886">
    <property type="entry name" value="MoCo_sulfurase"/>
</dbReference>
<dbReference type="InterPro" id="IPR005303">
    <property type="entry name" value="MOCOS_middle"/>
</dbReference>
<dbReference type="InterPro" id="IPR015424">
    <property type="entry name" value="PyrdxlP-dep_Trfase"/>
</dbReference>
<dbReference type="InterPro" id="IPR015421">
    <property type="entry name" value="PyrdxlP-dep_Trfase_major"/>
</dbReference>
<dbReference type="InterPro" id="IPR015422">
    <property type="entry name" value="PyrdxlP-dep_Trfase_small"/>
</dbReference>
<dbReference type="PANTHER" id="PTHR14237:SF19">
    <property type="entry name" value="MITOCHONDRIAL AMIDOXIME REDUCING COMPONENT 1"/>
    <property type="match status" value="1"/>
</dbReference>
<dbReference type="PANTHER" id="PTHR14237">
    <property type="entry name" value="MOLYBDOPTERIN COFACTOR SULFURASE MOSC"/>
    <property type="match status" value="1"/>
</dbReference>
<dbReference type="Pfam" id="PF00266">
    <property type="entry name" value="Aminotran_5"/>
    <property type="match status" value="1"/>
</dbReference>
<dbReference type="Pfam" id="PF03473">
    <property type="entry name" value="MOSC"/>
    <property type="match status" value="1"/>
</dbReference>
<dbReference type="Pfam" id="PF03476">
    <property type="entry name" value="MOSC_N"/>
    <property type="match status" value="1"/>
</dbReference>
<dbReference type="SUPFAM" id="SSF141673">
    <property type="entry name" value="MOSC N-terminal domain-like"/>
    <property type="match status" value="1"/>
</dbReference>
<dbReference type="SUPFAM" id="SSF53383">
    <property type="entry name" value="PLP-dependent transferases"/>
    <property type="match status" value="1"/>
</dbReference>
<dbReference type="PROSITE" id="PS51340">
    <property type="entry name" value="MOSC"/>
    <property type="match status" value="1"/>
</dbReference>
<protein>
    <recommendedName>
        <fullName evidence="1">Molybdenum cofactor sulfurase</fullName>
        <shortName evidence="1">MCS</shortName>
        <shortName evidence="1">MOS</shortName>
        <shortName evidence="1">MoCo sulfurase</shortName>
        <ecNumber evidence="1">2.8.1.9</ecNumber>
    </recommendedName>
    <alternativeName>
        <fullName evidence="1">Molybdenum cofactor sulfurtransferase</fullName>
    </alternativeName>
</protein>
<comment type="function">
    <text evidence="1 4">Sulfurates the molybdenum cofactor. Sulfation of molybdenum is essential for xanthine dehydrogenase (XDH) and aldehyde oxidase (ADO) enzymes in which molybdenum cofactor is liganded by 1 oxygen and 1 sulfur atom in active form.</text>
</comment>
<comment type="catalytic activity">
    <reaction evidence="1">
        <text>Mo-molybdopterin + L-cysteine + AH2 = thio-Mo-molybdopterin + L-alanine + A + H2O</text>
        <dbReference type="Rhea" id="RHEA:42636"/>
        <dbReference type="ChEBI" id="CHEBI:13193"/>
        <dbReference type="ChEBI" id="CHEBI:15377"/>
        <dbReference type="ChEBI" id="CHEBI:17499"/>
        <dbReference type="ChEBI" id="CHEBI:35235"/>
        <dbReference type="ChEBI" id="CHEBI:57972"/>
        <dbReference type="ChEBI" id="CHEBI:71302"/>
        <dbReference type="ChEBI" id="CHEBI:82685"/>
        <dbReference type="EC" id="2.8.1.9"/>
    </reaction>
</comment>
<comment type="cofactor">
    <cofactor>
        <name>pyridoxal 5'-phosphate</name>
        <dbReference type="ChEBI" id="CHEBI:597326"/>
    </cofactor>
</comment>
<comment type="pathway">
    <text evidence="4">Cofactor biosynthesis; molybdopterin biosynthesis.</text>
</comment>
<comment type="induction">
    <text evidence="3">By the nicotinate utilization transcriptional activating systems.</text>
</comment>
<comment type="similarity">
    <text evidence="1">Belongs to the class-V pyridoxal-phosphate-dependent aminotransferase family. MOCOS subfamily.</text>
</comment>
<sequence>MNLSKGTAAAYCSGYSEDVDVIREREYPLLKDTTYLDHAGTTLYANSLIHSFGRDLTGNLYGNPHSMSASSQLSAQRVDDIRLRALRFFNADPDEFDLVFVANATAGIKLVADALQNSPQGFWYGYYVDAHTSLVGVRELAKMGSRCFVNEDEVDSWISGLGSRREESLGLFAYPAQSNMNGRRVPMRWCEQIRAQKENADNMIYTLLDAASFVSTSPLDLSKIAAAPDFTVLSFYKIFGFPDLGALIVRKSSGDVFKHRKFFGGGTVDMVLTDGNPWHAKKQSSIHQSLEDGTLPFHSIIALDSAFETHGRLFRSMENVASHTRFLAKRLRDRMNALKHYNGTKVCQLYMSPNSSYDDASSQGPILAFNLRNSRGMWIGKSEVERLASIKNIQIRSGTLCNPGGTALSLGWTGADMLRHFSAGMRCGDDHDIMDERPTGILRISLGAMSSLTDVDTFIAFLEEFYVDKPPEGLPVPLTGNVSLHQPSFYVESLSVYPIKSCGAFRIPDGQRWEVRREGLAWDREWCLVHQGTGITLNQKRYPRMALIRPTLDLERCLLRITCGEANSRDGKTLEISLNRIGTNSLTTSLCQNASKPSTVCGDKVVLQAYTSPAVSRFFTDFLGVPCTLARFPPQSSTRFHSRATAAINRDQNYSQKQSPSMPGSFPQAPSSPDPYPTPILLSNESPLLLISRSSVNRLNESIKSASQPCSNPGSAASKKAVAADVFRANVVVAENISTAERPYIEDTWASLSIGSGPEQLRFDVLGSCERCQMVCVDQYTGQRGDEPYATLAKTRKIDRKILFGRHISPVGRPKDAENGCLGTIMVGDAVTPSYDNES</sequence>
<name>MOCOS_EMENI</name>
<proteinExistence type="evidence at transcript level"/>
<organism>
    <name type="scientific">Emericella nidulans (strain FGSC A4 / ATCC 38163 / CBS 112.46 / NRRL 194 / M139)</name>
    <name type="common">Aspergillus nidulans</name>
    <dbReference type="NCBI Taxonomy" id="227321"/>
    <lineage>
        <taxon>Eukaryota</taxon>
        <taxon>Fungi</taxon>
        <taxon>Dikarya</taxon>
        <taxon>Ascomycota</taxon>
        <taxon>Pezizomycotina</taxon>
        <taxon>Eurotiomycetes</taxon>
        <taxon>Eurotiomycetidae</taxon>
        <taxon>Eurotiales</taxon>
        <taxon>Aspergillaceae</taxon>
        <taxon>Aspergillus</taxon>
        <taxon>Aspergillus subgen. Nidulantes</taxon>
    </lineage>
</organism>
<evidence type="ECO:0000255" key="1">
    <source>
        <dbReference type="HAMAP-Rule" id="MF_03050"/>
    </source>
</evidence>
<evidence type="ECO:0000256" key="2">
    <source>
        <dbReference type="SAM" id="MobiDB-lite"/>
    </source>
</evidence>
<evidence type="ECO:0000269" key="3">
    <source>
    </source>
</evidence>
<evidence type="ECO:0000269" key="4">
    <source>
    </source>
</evidence>
<evidence type="ECO:0000305" key="5"/>